<sequence>MQYRRILLKLSGEALAGKDGYGINAEMLERFAEEVKEARDMGAEIALVIGGGNIFRGVSDAAKNMDRVQADYMGMLATVINSIAFQDALERLGVYTRLQTAIKMEQMAEPFIRRRAIRHLEKGRVVIFGAGTGNPYFTTDTAASLRAIEIEADVIVKGTRVDGVYDSDPETNPSAEFFPKISYLDVIRKNLRVMDMTAITLCRENTLPIVVMNMNEKGNLSRLIRGEHVGSLVHA</sequence>
<name>PYRH_CHLL3</name>
<gene>
    <name evidence="1" type="primary">pyrH</name>
    <name type="ordered locus">Plut_0405</name>
</gene>
<dbReference type="EC" id="2.7.4.22" evidence="1"/>
<dbReference type="EMBL" id="CP000096">
    <property type="protein sequence ID" value="ABB23293.1"/>
    <property type="molecule type" value="Genomic_DNA"/>
</dbReference>
<dbReference type="RefSeq" id="WP_011357168.1">
    <property type="nucleotide sequence ID" value="NC_007512.1"/>
</dbReference>
<dbReference type="SMR" id="Q3B5T8"/>
<dbReference type="STRING" id="319225.Plut_0405"/>
<dbReference type="KEGG" id="plt:Plut_0405"/>
<dbReference type="eggNOG" id="COG0528">
    <property type="taxonomic scope" value="Bacteria"/>
</dbReference>
<dbReference type="HOGENOM" id="CLU_033861_0_0_10"/>
<dbReference type="OrthoDB" id="9807458at2"/>
<dbReference type="UniPathway" id="UPA00159">
    <property type="reaction ID" value="UER00275"/>
</dbReference>
<dbReference type="Proteomes" id="UP000002709">
    <property type="component" value="Chromosome"/>
</dbReference>
<dbReference type="GO" id="GO:0005737">
    <property type="term" value="C:cytoplasm"/>
    <property type="evidence" value="ECO:0007669"/>
    <property type="project" value="UniProtKB-SubCell"/>
</dbReference>
<dbReference type="GO" id="GO:0005524">
    <property type="term" value="F:ATP binding"/>
    <property type="evidence" value="ECO:0007669"/>
    <property type="project" value="UniProtKB-KW"/>
</dbReference>
<dbReference type="GO" id="GO:0033862">
    <property type="term" value="F:UMP kinase activity"/>
    <property type="evidence" value="ECO:0007669"/>
    <property type="project" value="UniProtKB-EC"/>
</dbReference>
<dbReference type="GO" id="GO:0044210">
    <property type="term" value="P:'de novo' CTP biosynthetic process"/>
    <property type="evidence" value="ECO:0007669"/>
    <property type="project" value="UniProtKB-UniRule"/>
</dbReference>
<dbReference type="GO" id="GO:0006225">
    <property type="term" value="P:UDP biosynthetic process"/>
    <property type="evidence" value="ECO:0007669"/>
    <property type="project" value="TreeGrafter"/>
</dbReference>
<dbReference type="CDD" id="cd04254">
    <property type="entry name" value="AAK_UMPK-PyrH-Ec"/>
    <property type="match status" value="1"/>
</dbReference>
<dbReference type="FunFam" id="3.40.1160.10:FF:000001">
    <property type="entry name" value="Uridylate kinase"/>
    <property type="match status" value="1"/>
</dbReference>
<dbReference type="Gene3D" id="3.40.1160.10">
    <property type="entry name" value="Acetylglutamate kinase-like"/>
    <property type="match status" value="1"/>
</dbReference>
<dbReference type="HAMAP" id="MF_01220_B">
    <property type="entry name" value="PyrH_B"/>
    <property type="match status" value="1"/>
</dbReference>
<dbReference type="InterPro" id="IPR036393">
    <property type="entry name" value="AceGlu_kinase-like_sf"/>
</dbReference>
<dbReference type="InterPro" id="IPR001048">
    <property type="entry name" value="Asp/Glu/Uridylate_kinase"/>
</dbReference>
<dbReference type="InterPro" id="IPR011817">
    <property type="entry name" value="Uridylate_kinase"/>
</dbReference>
<dbReference type="InterPro" id="IPR015963">
    <property type="entry name" value="Uridylate_kinase_bac"/>
</dbReference>
<dbReference type="NCBIfam" id="TIGR02075">
    <property type="entry name" value="pyrH_bact"/>
    <property type="match status" value="1"/>
</dbReference>
<dbReference type="PANTHER" id="PTHR42833">
    <property type="entry name" value="URIDYLATE KINASE"/>
    <property type="match status" value="1"/>
</dbReference>
<dbReference type="PANTHER" id="PTHR42833:SF4">
    <property type="entry name" value="URIDYLATE KINASE PUMPKIN, CHLOROPLASTIC"/>
    <property type="match status" value="1"/>
</dbReference>
<dbReference type="Pfam" id="PF00696">
    <property type="entry name" value="AA_kinase"/>
    <property type="match status" value="1"/>
</dbReference>
<dbReference type="PIRSF" id="PIRSF005650">
    <property type="entry name" value="Uridylate_kin"/>
    <property type="match status" value="1"/>
</dbReference>
<dbReference type="SUPFAM" id="SSF53633">
    <property type="entry name" value="Carbamate kinase-like"/>
    <property type="match status" value="1"/>
</dbReference>
<proteinExistence type="inferred from homology"/>
<comment type="function">
    <text evidence="1">Catalyzes the reversible phosphorylation of UMP to UDP.</text>
</comment>
<comment type="catalytic activity">
    <reaction evidence="1">
        <text>UMP + ATP = UDP + ADP</text>
        <dbReference type="Rhea" id="RHEA:24400"/>
        <dbReference type="ChEBI" id="CHEBI:30616"/>
        <dbReference type="ChEBI" id="CHEBI:57865"/>
        <dbReference type="ChEBI" id="CHEBI:58223"/>
        <dbReference type="ChEBI" id="CHEBI:456216"/>
        <dbReference type="EC" id="2.7.4.22"/>
    </reaction>
</comment>
<comment type="activity regulation">
    <text evidence="1">Allosterically activated by GTP. Inhibited by UTP.</text>
</comment>
<comment type="pathway">
    <text evidence="1">Pyrimidine metabolism; CTP biosynthesis via de novo pathway; UDP from UMP (UMPK route): step 1/1.</text>
</comment>
<comment type="subunit">
    <text evidence="1">Homohexamer.</text>
</comment>
<comment type="subcellular location">
    <subcellularLocation>
        <location evidence="1">Cytoplasm</location>
    </subcellularLocation>
</comment>
<comment type="similarity">
    <text evidence="1">Belongs to the UMP kinase family.</text>
</comment>
<reference key="1">
    <citation type="submission" date="2005-08" db="EMBL/GenBank/DDBJ databases">
        <title>Complete sequence of Pelodictyon luteolum DSM 273.</title>
        <authorList>
            <consortium name="US DOE Joint Genome Institute"/>
            <person name="Copeland A."/>
            <person name="Lucas S."/>
            <person name="Lapidus A."/>
            <person name="Barry K."/>
            <person name="Detter J.C."/>
            <person name="Glavina T."/>
            <person name="Hammon N."/>
            <person name="Israni S."/>
            <person name="Pitluck S."/>
            <person name="Bryant D."/>
            <person name="Schmutz J."/>
            <person name="Larimer F."/>
            <person name="Land M."/>
            <person name="Kyrpides N."/>
            <person name="Ivanova N."/>
            <person name="Richardson P."/>
        </authorList>
    </citation>
    <scope>NUCLEOTIDE SEQUENCE [LARGE SCALE GENOMIC DNA]</scope>
    <source>
        <strain>DSM 273 / BCRC 81028 / 2530</strain>
    </source>
</reference>
<evidence type="ECO:0000255" key="1">
    <source>
        <dbReference type="HAMAP-Rule" id="MF_01220"/>
    </source>
</evidence>
<accession>Q3B5T8</accession>
<organism>
    <name type="scientific">Chlorobium luteolum (strain DSM 273 / BCRC 81028 / 2530)</name>
    <name type="common">Pelodictyon luteolum</name>
    <dbReference type="NCBI Taxonomy" id="319225"/>
    <lineage>
        <taxon>Bacteria</taxon>
        <taxon>Pseudomonadati</taxon>
        <taxon>Chlorobiota</taxon>
        <taxon>Chlorobiia</taxon>
        <taxon>Chlorobiales</taxon>
        <taxon>Chlorobiaceae</taxon>
        <taxon>Chlorobium/Pelodictyon group</taxon>
        <taxon>Pelodictyon</taxon>
    </lineage>
</organism>
<protein>
    <recommendedName>
        <fullName evidence="1">Uridylate kinase</fullName>
        <shortName evidence="1">UK</shortName>
        <ecNumber evidence="1">2.7.4.22</ecNumber>
    </recommendedName>
    <alternativeName>
        <fullName evidence="1">Uridine monophosphate kinase</fullName>
        <shortName evidence="1">UMP kinase</shortName>
        <shortName evidence="1">UMPK</shortName>
    </alternativeName>
</protein>
<keyword id="KW-0021">Allosteric enzyme</keyword>
<keyword id="KW-0067">ATP-binding</keyword>
<keyword id="KW-0963">Cytoplasm</keyword>
<keyword id="KW-0418">Kinase</keyword>
<keyword id="KW-0547">Nucleotide-binding</keyword>
<keyword id="KW-0665">Pyrimidine biosynthesis</keyword>
<keyword id="KW-1185">Reference proteome</keyword>
<keyword id="KW-0808">Transferase</keyword>
<feature type="chain" id="PRO_0000323915" description="Uridylate kinase">
    <location>
        <begin position="1"/>
        <end position="235"/>
    </location>
</feature>
<feature type="region of interest" description="Involved in allosteric activation by GTP" evidence="1">
    <location>
        <begin position="17"/>
        <end position="22"/>
    </location>
</feature>
<feature type="binding site" evidence="1">
    <location>
        <begin position="9"/>
        <end position="12"/>
    </location>
    <ligand>
        <name>ATP</name>
        <dbReference type="ChEBI" id="CHEBI:30616"/>
    </ligand>
</feature>
<feature type="binding site" evidence="1">
    <location>
        <position position="51"/>
    </location>
    <ligand>
        <name>UMP</name>
        <dbReference type="ChEBI" id="CHEBI:57865"/>
    </ligand>
</feature>
<feature type="binding site" evidence="1">
    <location>
        <position position="52"/>
    </location>
    <ligand>
        <name>ATP</name>
        <dbReference type="ChEBI" id="CHEBI:30616"/>
    </ligand>
</feature>
<feature type="binding site" evidence="1">
    <location>
        <position position="56"/>
    </location>
    <ligand>
        <name>ATP</name>
        <dbReference type="ChEBI" id="CHEBI:30616"/>
    </ligand>
</feature>
<feature type="binding site" evidence="1">
    <location>
        <position position="71"/>
    </location>
    <ligand>
        <name>UMP</name>
        <dbReference type="ChEBI" id="CHEBI:57865"/>
    </ligand>
</feature>
<feature type="binding site" evidence="1">
    <location>
        <begin position="132"/>
        <end position="139"/>
    </location>
    <ligand>
        <name>UMP</name>
        <dbReference type="ChEBI" id="CHEBI:57865"/>
    </ligand>
</feature>
<feature type="binding site" evidence="1">
    <location>
        <position position="159"/>
    </location>
    <ligand>
        <name>ATP</name>
        <dbReference type="ChEBI" id="CHEBI:30616"/>
    </ligand>
</feature>
<feature type="binding site" evidence="1">
    <location>
        <position position="165"/>
    </location>
    <ligand>
        <name>ATP</name>
        <dbReference type="ChEBI" id="CHEBI:30616"/>
    </ligand>
</feature>
<feature type="binding site" evidence="1">
    <location>
        <position position="168"/>
    </location>
    <ligand>
        <name>ATP</name>
        <dbReference type="ChEBI" id="CHEBI:30616"/>
    </ligand>
</feature>